<accession>P45031</accession>
<organism>
    <name type="scientific">Haemophilus influenzae (strain ATCC 51907 / DSM 11121 / KW20 / Rd)</name>
    <dbReference type="NCBI Taxonomy" id="71421"/>
    <lineage>
        <taxon>Bacteria</taxon>
        <taxon>Pseudomonadati</taxon>
        <taxon>Pseudomonadota</taxon>
        <taxon>Gammaproteobacteria</taxon>
        <taxon>Pasteurellales</taxon>
        <taxon>Pasteurellaceae</taxon>
        <taxon>Haemophilus</taxon>
    </lineage>
</organism>
<protein>
    <recommendedName>
        <fullName evidence="1">Intermembrane phospholipid transport system ATP-binding protein MlaF</fullName>
        <ecNumber evidence="1">7.6.2.-</ecNumber>
    </recommendedName>
</protein>
<reference key="1">
    <citation type="journal article" date="1995" name="Science">
        <title>Whole-genome random sequencing and assembly of Haemophilus influenzae Rd.</title>
        <authorList>
            <person name="Fleischmann R.D."/>
            <person name="Adams M.D."/>
            <person name="White O."/>
            <person name="Clayton R.A."/>
            <person name="Kirkness E.F."/>
            <person name="Kerlavage A.R."/>
            <person name="Bult C.J."/>
            <person name="Tomb J.-F."/>
            <person name="Dougherty B.A."/>
            <person name="Merrick J.M."/>
            <person name="McKenney K."/>
            <person name="Sutton G.G."/>
            <person name="FitzHugh W."/>
            <person name="Fields C.A."/>
            <person name="Gocayne J.D."/>
            <person name="Scott J.D."/>
            <person name="Shirley R."/>
            <person name="Liu L.-I."/>
            <person name="Glodek A."/>
            <person name="Kelley J.M."/>
            <person name="Weidman J.F."/>
            <person name="Phillips C.A."/>
            <person name="Spriggs T."/>
            <person name="Hedblom E."/>
            <person name="Cotton M.D."/>
            <person name="Utterback T.R."/>
            <person name="Hanna M.C."/>
            <person name="Nguyen D.T."/>
            <person name="Saudek D.M."/>
            <person name="Brandon R.C."/>
            <person name="Fine L.D."/>
            <person name="Fritchman J.L."/>
            <person name="Fuhrmann J.L."/>
            <person name="Geoghagen N.S.M."/>
            <person name="Gnehm C.L."/>
            <person name="McDonald L.A."/>
            <person name="Small K.V."/>
            <person name="Fraser C.M."/>
            <person name="Smith H.O."/>
            <person name="Venter J.C."/>
        </authorList>
    </citation>
    <scope>NUCLEOTIDE SEQUENCE [LARGE SCALE GENOMIC DNA]</scope>
    <source>
        <strain>ATCC 51907 / DSM 11121 / KW20 / Rd</strain>
    </source>
</reference>
<reference key="2">
    <citation type="journal article" date="2000" name="Electrophoresis">
        <title>Two-dimensional map of the proteome of Haemophilus influenzae.</title>
        <authorList>
            <person name="Langen H."/>
            <person name="Takacs B."/>
            <person name="Evers S."/>
            <person name="Berndt P."/>
            <person name="Lahm H.W."/>
            <person name="Wipf B."/>
            <person name="Gray C."/>
            <person name="Fountoulakis M."/>
        </authorList>
    </citation>
    <scope>IDENTIFICATION BY MASS SPECTROMETRY</scope>
    <source>
        <strain>ATCC 51907 / DSM 11121 / KW20 / Rd</strain>
    </source>
</reference>
<proteinExistence type="evidence at protein level"/>
<comment type="function">
    <text evidence="1">Part of the ABC transporter complex MlaFEDB, which is involved in a phospholipid transport pathway that maintains lipid asymmetry in the outer membrane by retrograde trafficking of phospholipids from the outer membrane to the inner membrane. Responsible for energy coupling to the transport system.</text>
</comment>
<comment type="subunit">
    <text evidence="1">The complex is composed of two ATP-binding proteins (MlaF), two transmembrane proteins (MlaE), two cytoplasmic solute-binding proteins (MlaB) and six periplasmic solute-binding proteins (MlaD).</text>
</comment>
<comment type="subcellular location">
    <subcellularLocation>
        <location evidence="1">Cell inner membrane</location>
        <topology evidence="1">Peripheral membrane protein</topology>
        <orientation evidence="1">Cytoplasmic side</orientation>
    </subcellularLocation>
</comment>
<comment type="similarity">
    <text evidence="3">Belongs to the ABC transporter superfamily. MlaF family.</text>
</comment>
<sequence>MNQNLIEVKNLTFKRGDRVIYDNLNLQVKKGKITAIMGPSGIGKTTLLKLIGGQLMPEQGEILFDGQDICRLSNRELYEVRKRMGMLFQSGALFTDISTFDNVAFPIREHTHLPENLIRQIVLMKLEAVGLRGAAALMPSELSGGMARRAALARAIALDPDLIMFDEPFTGQDPISMGVILSLIKRLNEALNLTSIVVSHDVEEVLSIADYAYIIADQKVIAEGTSEQLLQSQDLRVVQFLKGESDGPVRFKYPAQDYVKELFE</sequence>
<gene>
    <name evidence="1" type="primary">mlaF</name>
    <name type="ordered locus">HI_1087</name>
</gene>
<name>MLAF_HAEIN</name>
<keyword id="KW-0067">ATP-binding</keyword>
<keyword id="KW-0997">Cell inner membrane</keyword>
<keyword id="KW-1003">Cell membrane</keyword>
<keyword id="KW-0472">Membrane</keyword>
<keyword id="KW-0547">Nucleotide-binding</keyword>
<keyword id="KW-1185">Reference proteome</keyword>
<keyword id="KW-1278">Translocase</keyword>
<keyword id="KW-0813">Transport</keyword>
<feature type="chain" id="PRO_0000093174" description="Intermembrane phospholipid transport system ATP-binding protein MlaF">
    <location>
        <begin position="1"/>
        <end position="264"/>
    </location>
</feature>
<feature type="domain" description="ABC transporter" evidence="2">
    <location>
        <begin position="6"/>
        <end position="242"/>
    </location>
</feature>
<feature type="binding site" evidence="2">
    <location>
        <begin position="38"/>
        <end position="45"/>
    </location>
    <ligand>
        <name>ATP</name>
        <dbReference type="ChEBI" id="CHEBI:30616"/>
    </ligand>
</feature>
<evidence type="ECO:0000250" key="1">
    <source>
        <dbReference type="UniProtKB" id="P63386"/>
    </source>
</evidence>
<evidence type="ECO:0000255" key="2">
    <source>
        <dbReference type="PROSITE-ProRule" id="PRU00434"/>
    </source>
</evidence>
<evidence type="ECO:0000305" key="3"/>
<dbReference type="EC" id="7.6.2.-" evidence="1"/>
<dbReference type="EMBL" id="L42023">
    <property type="protein sequence ID" value="AAC22743.1"/>
    <property type="molecule type" value="Genomic_DNA"/>
</dbReference>
<dbReference type="PIR" id="B64182">
    <property type="entry name" value="B64182"/>
</dbReference>
<dbReference type="RefSeq" id="NP_439244.1">
    <property type="nucleotide sequence ID" value="NC_000907.1"/>
</dbReference>
<dbReference type="SMR" id="P45031"/>
<dbReference type="STRING" id="71421.HI_1087"/>
<dbReference type="EnsemblBacteria" id="AAC22743">
    <property type="protein sequence ID" value="AAC22743"/>
    <property type="gene ID" value="HI_1087"/>
</dbReference>
<dbReference type="KEGG" id="hin:HI_1087"/>
<dbReference type="PATRIC" id="fig|71421.8.peg.1132"/>
<dbReference type="eggNOG" id="COG1127">
    <property type="taxonomic scope" value="Bacteria"/>
</dbReference>
<dbReference type="HOGENOM" id="CLU_000604_1_22_6"/>
<dbReference type="OrthoDB" id="9802264at2"/>
<dbReference type="PhylomeDB" id="P45031"/>
<dbReference type="BioCyc" id="HINF71421:G1GJ1-1122-MONOMER"/>
<dbReference type="Proteomes" id="UP000000579">
    <property type="component" value="Chromosome"/>
</dbReference>
<dbReference type="GO" id="GO:0005886">
    <property type="term" value="C:plasma membrane"/>
    <property type="evidence" value="ECO:0007669"/>
    <property type="project" value="UniProtKB-SubCell"/>
</dbReference>
<dbReference type="GO" id="GO:0005524">
    <property type="term" value="F:ATP binding"/>
    <property type="evidence" value="ECO:0007669"/>
    <property type="project" value="UniProtKB-KW"/>
</dbReference>
<dbReference type="GO" id="GO:0016887">
    <property type="term" value="F:ATP hydrolysis activity"/>
    <property type="evidence" value="ECO:0007669"/>
    <property type="project" value="InterPro"/>
</dbReference>
<dbReference type="CDD" id="cd03261">
    <property type="entry name" value="ABC_Org_Solvent_Resistant"/>
    <property type="match status" value="1"/>
</dbReference>
<dbReference type="Gene3D" id="3.40.50.300">
    <property type="entry name" value="P-loop containing nucleotide triphosphate hydrolases"/>
    <property type="match status" value="1"/>
</dbReference>
<dbReference type="InterPro" id="IPR003593">
    <property type="entry name" value="AAA+_ATPase"/>
</dbReference>
<dbReference type="InterPro" id="IPR003439">
    <property type="entry name" value="ABC_transporter-like_ATP-bd"/>
</dbReference>
<dbReference type="InterPro" id="IPR017871">
    <property type="entry name" value="ABC_transporter-like_CS"/>
</dbReference>
<dbReference type="InterPro" id="IPR027417">
    <property type="entry name" value="P-loop_NTPase"/>
</dbReference>
<dbReference type="NCBIfam" id="NF008809">
    <property type="entry name" value="PRK11831.1"/>
    <property type="match status" value="1"/>
</dbReference>
<dbReference type="PANTHER" id="PTHR43023:SF6">
    <property type="entry name" value="INTERMEMBRANE PHOSPHOLIPID TRANSPORT SYSTEM ATP-BINDING PROTEIN MLAF"/>
    <property type="match status" value="1"/>
</dbReference>
<dbReference type="PANTHER" id="PTHR43023">
    <property type="entry name" value="PROTEIN TRIGALACTOSYLDIACYLGLYCEROL 3, CHLOROPLASTIC"/>
    <property type="match status" value="1"/>
</dbReference>
<dbReference type="Pfam" id="PF00005">
    <property type="entry name" value="ABC_tran"/>
    <property type="match status" value="1"/>
</dbReference>
<dbReference type="SMART" id="SM00382">
    <property type="entry name" value="AAA"/>
    <property type="match status" value="1"/>
</dbReference>
<dbReference type="SUPFAM" id="SSF52540">
    <property type="entry name" value="P-loop containing nucleoside triphosphate hydrolases"/>
    <property type="match status" value="1"/>
</dbReference>
<dbReference type="PROSITE" id="PS00211">
    <property type="entry name" value="ABC_TRANSPORTER_1"/>
    <property type="match status" value="1"/>
</dbReference>
<dbReference type="PROSITE" id="PS50893">
    <property type="entry name" value="ABC_TRANSPORTER_2"/>
    <property type="match status" value="1"/>
</dbReference>